<organism>
    <name type="scientific">Bacillus cereus (strain ATCC 10987 / NRS 248)</name>
    <dbReference type="NCBI Taxonomy" id="222523"/>
    <lineage>
        <taxon>Bacteria</taxon>
        <taxon>Bacillati</taxon>
        <taxon>Bacillota</taxon>
        <taxon>Bacilli</taxon>
        <taxon>Bacillales</taxon>
        <taxon>Bacillaceae</taxon>
        <taxon>Bacillus</taxon>
        <taxon>Bacillus cereus group</taxon>
    </lineage>
</organism>
<gene>
    <name evidence="5" type="primary">ykfC</name>
    <name evidence="8" type="ordered locus">BCE_2878</name>
</gene>
<accession>Q736M3</accession>
<keyword id="KW-0002">3D-structure</keyword>
<keyword id="KW-0961">Cell wall biogenesis/degradation</keyword>
<keyword id="KW-0378">Hydrolase</keyword>
<keyword id="KW-0645">Protease</keyword>
<keyword id="KW-0732">Signal</keyword>
<keyword id="KW-0788">Thiol protease</keyword>
<evidence type="ECO:0000250" key="1">
    <source>
        <dbReference type="UniProtKB" id="O35010"/>
    </source>
</evidence>
<evidence type="ECO:0000255" key="2"/>
<evidence type="ECO:0000255" key="3">
    <source>
        <dbReference type="PROSITE-ProRule" id="PRU01284"/>
    </source>
</evidence>
<evidence type="ECO:0000269" key="4">
    <source>
    </source>
</evidence>
<evidence type="ECO:0000303" key="5">
    <source>
    </source>
</evidence>
<evidence type="ECO:0000305" key="6"/>
<evidence type="ECO:0000305" key="7">
    <source>
    </source>
</evidence>
<evidence type="ECO:0000312" key="8">
    <source>
        <dbReference type="EMBL" id="AAS41789.1"/>
    </source>
</evidence>
<evidence type="ECO:0007744" key="9">
    <source>
        <dbReference type="PDB" id="3H41"/>
    </source>
</evidence>
<evidence type="ECO:0007829" key="10">
    <source>
        <dbReference type="PDB" id="3H41"/>
    </source>
</evidence>
<name>YKFC_BACC1</name>
<comment type="function">
    <text evidence="1">Specifically hydrolyzes gamma-D-glutamyl-L-lysine bonds in murein peptides, releasing L-Ala-D-Glu.</text>
</comment>
<comment type="catalytic activity">
    <reaction evidence="1">
        <text>The enzyme releases L-Ala-gamma-D-Glu dipeptides from cell wall peptides via cleavage of an L-Ala-gamma-D-Glu-|-L-Lys bond.</text>
        <dbReference type="EC" id="3.4.14.13"/>
    </reaction>
</comment>
<comment type="pathway">
    <text evidence="1">Cell wall degradation; peptidoglycan degradation.</text>
</comment>
<comment type="subunit">
    <text evidence="4">Monomer in solution.</text>
</comment>
<comment type="similarity">
    <text evidence="3 6">Belongs to the peptidase C40 family.</text>
</comment>
<sequence>MKKVGTAFLTTLFIFSSFTSAHAEEKKDSKAFIDVSAATLWTAPDSLRPIDVPSATNPVDLWKWTKSMTLDEKLWLTNANKLETQALLGQEVTVVDKKGDWVKVLVHGQPTPRNEEGYPGWMPEKQLTYNQEFADKTNEPFVLVTKPTAILYINPSEKHKSLEVSYNTRLPLLSEDTISYRVLLPNGQKAWLRKNDGTFYRSQNDIPTPAADDLINTGKMFLGLPYIWAGTSGFGFDCSGFTHTIYKSHGITIPRDSGPQSRNGVAVDKEHLQKGDLIFFAHDQGKGSVHHVAMYIGDGNMIHSPRAERSVEIIPLNTPGYIEEYAGARRYLP</sequence>
<protein>
    <recommendedName>
        <fullName evidence="6">Gamma-D-glutamyl-L-lysine dipeptidyl-peptidase</fullName>
        <ecNumber evidence="1">3.4.14.13</ecNumber>
    </recommendedName>
    <alternativeName>
        <fullName evidence="5">Gamma-D-glutamyl-L-diamino acid endopeptidase</fullName>
    </alternativeName>
</protein>
<reference key="1">
    <citation type="journal article" date="2004" name="Nucleic Acids Res.">
        <title>The genome sequence of Bacillus cereus ATCC 10987 reveals metabolic adaptations and a large plasmid related to Bacillus anthracis pXO1.</title>
        <authorList>
            <person name="Rasko D.A."/>
            <person name="Ravel J."/>
            <person name="Oekstad O.A."/>
            <person name="Helgason E."/>
            <person name="Cer R.Z."/>
            <person name="Jiang L."/>
            <person name="Shores K.A."/>
            <person name="Fouts D.E."/>
            <person name="Tourasse N.J."/>
            <person name="Angiuoli S.V."/>
            <person name="Kolonay J.F."/>
            <person name="Nelson W.C."/>
            <person name="Kolstoe A.-B."/>
            <person name="Fraser C.M."/>
            <person name="Read T.D."/>
        </authorList>
    </citation>
    <scope>NUCLEOTIDE SEQUENCE [LARGE SCALE GENOMIC DNA]</scope>
    <source>
        <strain>ATCC 10987 / NRS 248</strain>
    </source>
</reference>
<reference evidence="9" key="2">
    <citation type="journal article" date="2010" name="Acta Crystallogr. F">
        <title>Structure of the gamma-D-glutamyl-L-diamino acid endopeptidase YkfC from Bacillus cereus in complex with L-Ala-gamma-D-Glu: insights into substrate recognition by NlpC/P60 cysteine peptidases.</title>
        <authorList>
            <person name="Xu Q."/>
            <person name="Abdubek P."/>
            <person name="Astakhova T."/>
            <person name="Axelrod H.L."/>
            <person name="Bakolitsa C."/>
            <person name="Cai X."/>
            <person name="Carlton D."/>
            <person name="Chen C."/>
            <person name="Chiu H.J."/>
            <person name="Chiu M."/>
            <person name="Clayton T."/>
            <person name="Das D."/>
            <person name="Deller M.C."/>
            <person name="Duan L."/>
            <person name="Ellrott K."/>
            <person name="Farr C.L."/>
            <person name="Feuerhelm J."/>
            <person name="Grant J.C."/>
            <person name="Grzechnik A."/>
            <person name="Han G.W."/>
            <person name="Jaroszewski L."/>
            <person name="Jin K.K."/>
            <person name="Klock H.E."/>
            <person name="Knuth M.W."/>
            <person name="Kozbial P."/>
            <person name="Krishna S.S."/>
            <person name="Kumar A."/>
            <person name="Lam W.W."/>
            <person name="Marciano D."/>
            <person name="Miller M.D."/>
            <person name="Morse A.T."/>
            <person name="Nigoghossian E."/>
            <person name="Nopakun A."/>
            <person name="Okach L."/>
            <person name="Puckett C."/>
            <person name="Reyes R."/>
            <person name="Tien H.J."/>
            <person name="Trame C.B."/>
            <person name="van den Bedem H."/>
            <person name="Weekes D."/>
            <person name="Wooten T."/>
            <person name="Yeh A."/>
            <person name="Hodgson K.O."/>
            <person name="Wooley J."/>
            <person name="Elsliger M.A."/>
            <person name="Deacon A.M."/>
            <person name="Godzik A."/>
            <person name="Lesley S.A."/>
            <person name="Wilson I.A."/>
        </authorList>
    </citation>
    <scope>X-RAY CRYSTALLOGRAPHY (1.79 ANGSTROMS) OF 24-333 IN COMPLEX WITH L-ALA-GAMMA-D-GLU</scope>
    <scope>SUBUNIT</scope>
    <scope>ACTIVE SITE</scope>
    <source>
        <strain>ATCC 10987 / NRS 248</strain>
    </source>
</reference>
<feature type="signal peptide" evidence="2">
    <location>
        <begin position="1"/>
        <end position="23"/>
    </location>
</feature>
<feature type="chain" id="PRO_5004285596" description="Gamma-D-glutamyl-L-lysine dipeptidyl-peptidase">
    <location>
        <begin position="24"/>
        <end position="333"/>
    </location>
</feature>
<feature type="domain" description="NlpC/P60" evidence="3">
    <location>
        <begin position="208"/>
        <end position="332"/>
    </location>
</feature>
<feature type="active site" description="Nucleophile" evidence="3 7">
    <location>
        <position position="238"/>
    </location>
</feature>
<feature type="active site" description="Proton acceptor" evidence="3 7">
    <location>
        <position position="291"/>
    </location>
</feature>
<feature type="active site" evidence="3 7">
    <location>
        <position position="303"/>
    </location>
</feature>
<feature type="binding site" evidence="4">
    <location>
        <position position="83"/>
    </location>
    <ligand>
        <name>substrate</name>
    </ligand>
</feature>
<feature type="binding site" evidence="4">
    <location>
        <position position="118"/>
    </location>
    <ligand>
        <name>substrate</name>
    </ligand>
</feature>
<feature type="binding site" evidence="4">
    <location>
        <begin position="237"/>
        <end position="239"/>
    </location>
    <ligand>
        <name>substrate</name>
    </ligand>
</feature>
<feature type="binding site" evidence="4">
    <location>
        <begin position="256"/>
        <end position="257"/>
    </location>
    <ligand>
        <name>substrate</name>
    </ligand>
</feature>
<feature type="strand" evidence="10">
    <location>
        <begin position="30"/>
        <end position="33"/>
    </location>
</feature>
<feature type="strand" evidence="10">
    <location>
        <begin position="35"/>
        <end position="45"/>
    </location>
</feature>
<feature type="helix" evidence="10">
    <location>
        <begin position="49"/>
        <end position="51"/>
    </location>
</feature>
<feature type="helix" evidence="10">
    <location>
        <begin position="52"/>
        <end position="55"/>
    </location>
</feature>
<feature type="strand" evidence="10">
    <location>
        <begin position="56"/>
        <end position="58"/>
    </location>
</feature>
<feature type="helix" evidence="10">
    <location>
        <begin position="61"/>
        <end position="67"/>
    </location>
</feature>
<feature type="helix" evidence="10">
    <location>
        <begin position="70"/>
        <end position="78"/>
    </location>
</feature>
<feature type="strand" evidence="10">
    <location>
        <begin position="82"/>
        <end position="87"/>
    </location>
</feature>
<feature type="strand" evidence="10">
    <location>
        <begin position="91"/>
        <end position="98"/>
    </location>
</feature>
<feature type="strand" evidence="10">
    <location>
        <begin position="101"/>
        <end position="106"/>
    </location>
</feature>
<feature type="strand" evidence="10">
    <location>
        <begin position="114"/>
        <end position="116"/>
    </location>
</feature>
<feature type="strand" evidence="10">
    <location>
        <begin position="118"/>
        <end position="123"/>
    </location>
</feature>
<feature type="helix" evidence="10">
    <location>
        <begin position="124"/>
        <end position="126"/>
    </location>
</feature>
<feature type="helix" evidence="10">
    <location>
        <begin position="131"/>
        <end position="135"/>
    </location>
</feature>
<feature type="turn" evidence="10">
    <location>
        <begin position="136"/>
        <end position="138"/>
    </location>
</feature>
<feature type="strand" evidence="10">
    <location>
        <begin position="141"/>
        <end position="144"/>
    </location>
</feature>
<feature type="strand" evidence="10">
    <location>
        <begin position="146"/>
        <end position="155"/>
    </location>
</feature>
<feature type="strand" evidence="10">
    <location>
        <begin position="161"/>
        <end position="165"/>
    </location>
</feature>
<feature type="strand" evidence="10">
    <location>
        <begin position="169"/>
        <end position="175"/>
    </location>
</feature>
<feature type="strand" evidence="10">
    <location>
        <begin position="177"/>
        <end position="183"/>
    </location>
</feature>
<feature type="strand" evidence="10">
    <location>
        <begin position="189"/>
        <end position="193"/>
    </location>
</feature>
<feature type="helix" evidence="10">
    <location>
        <begin position="194"/>
        <end position="196"/>
    </location>
</feature>
<feature type="strand" evidence="10">
    <location>
        <begin position="197"/>
        <end position="201"/>
    </location>
</feature>
<feature type="helix" evidence="10">
    <location>
        <begin position="203"/>
        <end position="205"/>
    </location>
</feature>
<feature type="helix" evidence="10">
    <location>
        <begin position="211"/>
        <end position="219"/>
    </location>
</feature>
<feature type="turn" evidence="10">
    <location>
        <begin position="220"/>
        <end position="223"/>
    </location>
</feature>
<feature type="helix" evidence="10">
    <location>
        <begin position="238"/>
        <end position="247"/>
    </location>
</feature>
<feature type="turn" evidence="10">
    <location>
        <begin position="248"/>
        <end position="250"/>
    </location>
</feature>
<feature type="helix" evidence="10">
    <location>
        <begin position="257"/>
        <end position="260"/>
    </location>
</feature>
<feature type="strand" evidence="10">
    <location>
        <begin position="263"/>
        <end position="267"/>
    </location>
</feature>
<feature type="helix" evidence="10">
    <location>
        <begin position="269"/>
        <end position="271"/>
    </location>
</feature>
<feature type="strand" evidence="10">
    <location>
        <begin position="277"/>
        <end position="281"/>
    </location>
</feature>
<feature type="helix" evidence="10">
    <location>
        <begin position="282"/>
        <end position="285"/>
    </location>
</feature>
<feature type="strand" evidence="10">
    <location>
        <begin position="289"/>
        <end position="297"/>
    </location>
</feature>
<feature type="strand" evidence="10">
    <location>
        <begin position="300"/>
        <end position="303"/>
    </location>
</feature>
<feature type="strand" evidence="10">
    <location>
        <begin position="309"/>
        <end position="317"/>
    </location>
</feature>
<feature type="helix" evidence="10">
    <location>
        <begin position="321"/>
        <end position="324"/>
    </location>
</feature>
<feature type="strand" evidence="10">
    <location>
        <begin position="325"/>
        <end position="330"/>
    </location>
</feature>
<dbReference type="EC" id="3.4.14.13" evidence="1"/>
<dbReference type="EMBL" id="AE017194">
    <property type="protein sequence ID" value="AAS41789.1"/>
    <property type="molecule type" value="Genomic_DNA"/>
</dbReference>
<dbReference type="PDB" id="3H41">
    <property type="method" value="X-ray"/>
    <property type="resolution" value="1.79 A"/>
    <property type="chains" value="A=23-333"/>
</dbReference>
<dbReference type="PDBsum" id="3H41"/>
<dbReference type="SMR" id="Q736M3"/>
<dbReference type="DNASU" id="2750805"/>
<dbReference type="KEGG" id="bca:BCE_2878"/>
<dbReference type="HOGENOM" id="CLU_016043_13_2_9"/>
<dbReference type="BRENDA" id="3.4.14.13">
    <property type="organism ID" value="648"/>
</dbReference>
<dbReference type="UniPathway" id="UPA00549"/>
<dbReference type="EvolutionaryTrace" id="Q736M3"/>
<dbReference type="Proteomes" id="UP000002527">
    <property type="component" value="Chromosome"/>
</dbReference>
<dbReference type="GO" id="GO:0008234">
    <property type="term" value="F:cysteine-type peptidase activity"/>
    <property type="evidence" value="ECO:0007669"/>
    <property type="project" value="UniProtKB-KW"/>
</dbReference>
<dbReference type="GO" id="GO:0016998">
    <property type="term" value="P:cell wall macromolecule catabolic process"/>
    <property type="evidence" value="ECO:0007669"/>
    <property type="project" value="UniProtKB-UniPathway"/>
</dbReference>
<dbReference type="GO" id="GO:0071555">
    <property type="term" value="P:cell wall organization"/>
    <property type="evidence" value="ECO:0007669"/>
    <property type="project" value="UniProtKB-KW"/>
</dbReference>
<dbReference type="GO" id="GO:0006508">
    <property type="term" value="P:proteolysis"/>
    <property type="evidence" value="ECO:0007669"/>
    <property type="project" value="UniProtKB-KW"/>
</dbReference>
<dbReference type="Gene3D" id="3.90.1720.10">
    <property type="entry name" value="endopeptidase domain like (from Nostoc punctiforme)"/>
    <property type="match status" value="1"/>
</dbReference>
<dbReference type="Gene3D" id="2.30.30.40">
    <property type="entry name" value="SH3 Domains"/>
    <property type="match status" value="2"/>
</dbReference>
<dbReference type="InterPro" id="IPR000064">
    <property type="entry name" value="NLP_P60_dom"/>
</dbReference>
<dbReference type="InterPro" id="IPR038765">
    <property type="entry name" value="Papain-like_cys_pep_sf"/>
</dbReference>
<dbReference type="InterPro" id="IPR051202">
    <property type="entry name" value="Peptidase_C40"/>
</dbReference>
<dbReference type="InterPro" id="IPR041382">
    <property type="entry name" value="SH3_16"/>
</dbReference>
<dbReference type="PANTHER" id="PTHR47053:SF3">
    <property type="entry name" value="GAMMA-D-GLUTAMYL-L-LYSINE DIPEPTIDYL-PEPTIDASE"/>
    <property type="match status" value="1"/>
</dbReference>
<dbReference type="PANTHER" id="PTHR47053">
    <property type="entry name" value="MUREIN DD-ENDOPEPTIDASE MEPH-RELATED"/>
    <property type="match status" value="1"/>
</dbReference>
<dbReference type="Pfam" id="PF00877">
    <property type="entry name" value="NLPC_P60"/>
    <property type="match status" value="1"/>
</dbReference>
<dbReference type="Pfam" id="PF18348">
    <property type="entry name" value="SH3_16"/>
    <property type="match status" value="1"/>
</dbReference>
<dbReference type="Pfam" id="PF23795">
    <property type="entry name" value="SH3_YKFC_2nd"/>
    <property type="match status" value="1"/>
</dbReference>
<dbReference type="SUPFAM" id="SSF54001">
    <property type="entry name" value="Cysteine proteinases"/>
    <property type="match status" value="1"/>
</dbReference>
<dbReference type="PROSITE" id="PS51935">
    <property type="entry name" value="NLPC_P60"/>
    <property type="match status" value="1"/>
</dbReference>
<proteinExistence type="evidence at protein level"/>